<comment type="function">
    <text evidence="1">Peptide which can recruit, activate and subsequently lyse human neutrophils, thus eliminating the main cellular defense against infection.</text>
</comment>
<comment type="similarity">
    <text evidence="2">Belongs to the phenol-soluble modulin alpha peptides family.</text>
</comment>
<protein>
    <recommendedName>
        <fullName>Phenol-soluble modulin alpha 1 peptide</fullName>
    </recommendedName>
</protein>
<organism>
    <name type="scientific">Staphylococcus aureus (strain N315)</name>
    <dbReference type="NCBI Taxonomy" id="158879"/>
    <lineage>
        <taxon>Bacteria</taxon>
        <taxon>Bacillati</taxon>
        <taxon>Bacillota</taxon>
        <taxon>Bacilli</taxon>
        <taxon>Bacillales</taxon>
        <taxon>Staphylococcaceae</taxon>
        <taxon>Staphylococcus</taxon>
    </lineage>
</organism>
<dbReference type="EMBL" id="BA000018">
    <property type="status" value="NOT_ANNOTATED_CDS"/>
    <property type="molecule type" value="Genomic_DNA"/>
</dbReference>
<dbReference type="SMR" id="P0C7Y7"/>
<dbReference type="GO" id="GO:0031640">
    <property type="term" value="P:killing of cells of another organism"/>
    <property type="evidence" value="ECO:0007669"/>
    <property type="project" value="UniProtKB-KW"/>
</dbReference>
<dbReference type="InterPro" id="IPR031429">
    <property type="entry name" value="PSM_alpha"/>
</dbReference>
<dbReference type="NCBIfam" id="NF033425">
    <property type="entry name" value="PSM_alpha_1_2"/>
    <property type="match status" value="1"/>
</dbReference>
<dbReference type="Pfam" id="PF17063">
    <property type="entry name" value="PSMalpha"/>
    <property type="match status" value="1"/>
</dbReference>
<proteinExistence type="inferred from homology"/>
<reference key="1">
    <citation type="journal article" date="2001" name="Lancet">
        <title>Whole genome sequencing of meticillin-resistant Staphylococcus aureus.</title>
        <authorList>
            <person name="Kuroda M."/>
            <person name="Ohta T."/>
            <person name="Uchiyama I."/>
            <person name="Baba T."/>
            <person name="Yuzawa H."/>
            <person name="Kobayashi I."/>
            <person name="Cui L."/>
            <person name="Oguchi A."/>
            <person name="Aoki K."/>
            <person name="Nagai Y."/>
            <person name="Lian J.-Q."/>
            <person name="Ito T."/>
            <person name="Kanamori M."/>
            <person name="Matsumaru H."/>
            <person name="Maruyama A."/>
            <person name="Murakami H."/>
            <person name="Hosoyama A."/>
            <person name="Mizutani-Ui Y."/>
            <person name="Takahashi N.K."/>
            <person name="Sawano T."/>
            <person name="Inoue R."/>
            <person name="Kaito C."/>
            <person name="Sekimizu K."/>
            <person name="Hirakawa H."/>
            <person name="Kuhara S."/>
            <person name="Goto S."/>
            <person name="Yabuzaki J."/>
            <person name="Kanehisa M."/>
            <person name="Yamashita A."/>
            <person name="Oshima K."/>
            <person name="Furuya K."/>
            <person name="Yoshino C."/>
            <person name="Shiba T."/>
            <person name="Hattori M."/>
            <person name="Ogasawara N."/>
            <person name="Hayashi H."/>
            <person name="Hiramatsu K."/>
        </authorList>
    </citation>
    <scope>NUCLEOTIDE SEQUENCE [LARGE SCALE GENOMIC DNA]</scope>
    <source>
        <strain>N315</strain>
    </source>
</reference>
<gene>
    <name type="primary">psmA1</name>
    <name type="ordered locus">SA0410.5</name>
</gene>
<name>PSMA1_STAAN</name>
<keyword id="KW-0204">Cytolysis</keyword>
<keyword id="KW-0843">Virulence</keyword>
<accession>P0C7Y7</accession>
<evidence type="ECO:0000250" key="1">
    <source>
        <dbReference type="UniProtKB" id="A9JX05"/>
    </source>
</evidence>
<evidence type="ECO:0000305" key="2"/>
<sequence length="21" mass="2260">MGIIAGIIKVIKSLIEQFTGK</sequence>
<feature type="peptide" id="PRO_0000345038" description="Phenol-soluble modulin alpha 1 peptide">
    <location>
        <begin position="1"/>
        <end position="21"/>
    </location>
</feature>